<organism>
    <name type="scientific">Colwellia psychrerythraea (strain 34H / ATCC BAA-681)</name>
    <name type="common">Vibrio psychroerythus</name>
    <dbReference type="NCBI Taxonomy" id="167879"/>
    <lineage>
        <taxon>Bacteria</taxon>
        <taxon>Pseudomonadati</taxon>
        <taxon>Pseudomonadota</taxon>
        <taxon>Gammaproteobacteria</taxon>
        <taxon>Alteromonadales</taxon>
        <taxon>Colwelliaceae</taxon>
        <taxon>Colwellia</taxon>
    </lineage>
</organism>
<feature type="chain" id="PRO_0000230863" description="Transcriptional repressor NrdR">
    <location>
        <begin position="1"/>
        <end position="165"/>
    </location>
</feature>
<feature type="domain" description="ATP-cone" evidence="1">
    <location>
        <begin position="49"/>
        <end position="139"/>
    </location>
</feature>
<feature type="zinc finger region" evidence="1">
    <location>
        <begin position="3"/>
        <end position="34"/>
    </location>
</feature>
<sequence>MYCPFCSANDTKVIDSRLVSDGHQVRRRRECLACHERYTTFESAELVMPRIIKRDGSREPFNEDKMLSGLTRALEKRPVSMEQIELAVNKLKSQMRATGEREISSEMLGDLIMAQLKELDKVAYLRFASVYLSFEDISEFADEITRLGKEKNGKAKKAKPAKTAK</sequence>
<proteinExistence type="inferred from homology"/>
<keyword id="KW-0067">ATP-binding</keyword>
<keyword id="KW-0238">DNA-binding</keyword>
<keyword id="KW-0479">Metal-binding</keyword>
<keyword id="KW-0547">Nucleotide-binding</keyword>
<keyword id="KW-0678">Repressor</keyword>
<keyword id="KW-0804">Transcription</keyword>
<keyword id="KW-0805">Transcription regulation</keyword>
<keyword id="KW-0862">Zinc</keyword>
<keyword id="KW-0863">Zinc-finger</keyword>
<protein>
    <recommendedName>
        <fullName evidence="1">Transcriptional repressor NrdR</fullName>
    </recommendedName>
</protein>
<accession>Q488N5</accession>
<dbReference type="EMBL" id="CP000083">
    <property type="protein sequence ID" value="AAZ27860.1"/>
    <property type="molecule type" value="Genomic_DNA"/>
</dbReference>
<dbReference type="RefSeq" id="WP_011041579.1">
    <property type="nucleotide sequence ID" value="NC_003910.7"/>
</dbReference>
<dbReference type="SMR" id="Q488N5"/>
<dbReference type="STRING" id="167879.CPS_0729"/>
<dbReference type="KEGG" id="cps:CPS_0729"/>
<dbReference type="eggNOG" id="COG1327">
    <property type="taxonomic scope" value="Bacteria"/>
</dbReference>
<dbReference type="HOGENOM" id="CLU_108412_0_0_6"/>
<dbReference type="Proteomes" id="UP000000547">
    <property type="component" value="Chromosome"/>
</dbReference>
<dbReference type="GO" id="GO:0005524">
    <property type="term" value="F:ATP binding"/>
    <property type="evidence" value="ECO:0007669"/>
    <property type="project" value="UniProtKB-KW"/>
</dbReference>
<dbReference type="GO" id="GO:0003677">
    <property type="term" value="F:DNA binding"/>
    <property type="evidence" value="ECO:0007669"/>
    <property type="project" value="UniProtKB-KW"/>
</dbReference>
<dbReference type="GO" id="GO:0008270">
    <property type="term" value="F:zinc ion binding"/>
    <property type="evidence" value="ECO:0007669"/>
    <property type="project" value="UniProtKB-UniRule"/>
</dbReference>
<dbReference type="GO" id="GO:0045892">
    <property type="term" value="P:negative regulation of DNA-templated transcription"/>
    <property type="evidence" value="ECO:0007669"/>
    <property type="project" value="UniProtKB-UniRule"/>
</dbReference>
<dbReference type="HAMAP" id="MF_00440">
    <property type="entry name" value="NrdR"/>
    <property type="match status" value="1"/>
</dbReference>
<dbReference type="InterPro" id="IPR005144">
    <property type="entry name" value="ATP-cone_dom"/>
</dbReference>
<dbReference type="InterPro" id="IPR055173">
    <property type="entry name" value="NrdR-like_N"/>
</dbReference>
<dbReference type="InterPro" id="IPR003796">
    <property type="entry name" value="RNR_NrdR-like"/>
</dbReference>
<dbReference type="NCBIfam" id="TIGR00244">
    <property type="entry name" value="transcriptional regulator NrdR"/>
    <property type="match status" value="1"/>
</dbReference>
<dbReference type="PANTHER" id="PTHR30455">
    <property type="entry name" value="TRANSCRIPTIONAL REPRESSOR NRDR"/>
    <property type="match status" value="1"/>
</dbReference>
<dbReference type="PANTHER" id="PTHR30455:SF2">
    <property type="entry name" value="TRANSCRIPTIONAL REPRESSOR NRDR"/>
    <property type="match status" value="1"/>
</dbReference>
<dbReference type="Pfam" id="PF03477">
    <property type="entry name" value="ATP-cone"/>
    <property type="match status" value="1"/>
</dbReference>
<dbReference type="Pfam" id="PF22811">
    <property type="entry name" value="Zn_ribbon_NrdR"/>
    <property type="match status" value="1"/>
</dbReference>
<dbReference type="PROSITE" id="PS51161">
    <property type="entry name" value="ATP_CONE"/>
    <property type="match status" value="1"/>
</dbReference>
<gene>
    <name evidence="1" type="primary">nrdR</name>
    <name type="ordered locus">CPS_0729</name>
</gene>
<name>NRDR_COLP3</name>
<evidence type="ECO:0000255" key="1">
    <source>
        <dbReference type="HAMAP-Rule" id="MF_00440"/>
    </source>
</evidence>
<reference key="1">
    <citation type="journal article" date="2005" name="Proc. Natl. Acad. Sci. U.S.A.">
        <title>The psychrophilic lifestyle as revealed by the genome sequence of Colwellia psychrerythraea 34H through genomic and proteomic analyses.</title>
        <authorList>
            <person name="Methe B.A."/>
            <person name="Nelson K.E."/>
            <person name="Deming J.W."/>
            <person name="Momen B."/>
            <person name="Melamud E."/>
            <person name="Zhang X."/>
            <person name="Moult J."/>
            <person name="Madupu R."/>
            <person name="Nelson W.C."/>
            <person name="Dodson R.J."/>
            <person name="Brinkac L.M."/>
            <person name="Daugherty S.C."/>
            <person name="Durkin A.S."/>
            <person name="DeBoy R.T."/>
            <person name="Kolonay J.F."/>
            <person name="Sullivan S.A."/>
            <person name="Zhou L."/>
            <person name="Davidsen T.M."/>
            <person name="Wu M."/>
            <person name="Huston A.L."/>
            <person name="Lewis M."/>
            <person name="Weaver B."/>
            <person name="Weidman J.F."/>
            <person name="Khouri H."/>
            <person name="Utterback T.R."/>
            <person name="Feldblyum T.V."/>
            <person name="Fraser C.M."/>
        </authorList>
    </citation>
    <scope>NUCLEOTIDE SEQUENCE [LARGE SCALE GENOMIC DNA]</scope>
    <source>
        <strain>34H / ATCC BAA-681</strain>
    </source>
</reference>
<comment type="function">
    <text evidence="1">Negatively regulates transcription of bacterial ribonucleotide reductase nrd genes and operons by binding to NrdR-boxes.</text>
</comment>
<comment type="cofactor">
    <cofactor evidence="1">
        <name>Zn(2+)</name>
        <dbReference type="ChEBI" id="CHEBI:29105"/>
    </cofactor>
    <text evidence="1">Binds 1 zinc ion.</text>
</comment>
<comment type="similarity">
    <text evidence="1">Belongs to the NrdR family.</text>
</comment>